<proteinExistence type="predicted"/>
<evidence type="ECO:0000256" key="1">
    <source>
        <dbReference type="SAM" id="MobiDB-lite"/>
    </source>
</evidence>
<feature type="chain" id="PRO_0000065543" description="Uncharacterized protein ZK688.1">
    <location>
        <begin position="1"/>
        <end position="192"/>
    </location>
</feature>
<feature type="region of interest" description="Disordered" evidence="1">
    <location>
        <begin position="71"/>
        <end position="100"/>
    </location>
</feature>
<feature type="compositionally biased region" description="Pro residues" evidence="1">
    <location>
        <begin position="77"/>
        <end position="91"/>
    </location>
</feature>
<accession>P34671</accession>
<organism>
    <name type="scientific">Caenorhabditis elegans</name>
    <dbReference type="NCBI Taxonomy" id="6239"/>
    <lineage>
        <taxon>Eukaryota</taxon>
        <taxon>Metazoa</taxon>
        <taxon>Ecdysozoa</taxon>
        <taxon>Nematoda</taxon>
        <taxon>Chromadorea</taxon>
        <taxon>Rhabditida</taxon>
        <taxon>Rhabditina</taxon>
        <taxon>Rhabditomorpha</taxon>
        <taxon>Rhabditoidea</taxon>
        <taxon>Rhabditidae</taxon>
        <taxon>Peloderinae</taxon>
        <taxon>Caenorhabditis</taxon>
    </lineage>
</organism>
<sequence>MLLCILCILYFFTTVTQQCAPHSPSPWTKTTHVNNHHHHQTVENFYLDNRTIYHKIIEIEKRIERIEEKENNVLPEPSKPNNPVVNPPVSPIQPKTDPEQSENDCLSCPSLIPILDSCENCVSVKISPPFEYYSCKAVELKCGDGAKKLKISDGFQKNIHENNFKLICKNGSWMMMANHAEHKVETITCLTN</sequence>
<gene>
    <name type="ORF">ZK688.1</name>
</gene>
<dbReference type="EMBL" id="FO080277">
    <property type="protein sequence ID" value="CCD62532.1"/>
    <property type="molecule type" value="Genomic_DNA"/>
</dbReference>
<dbReference type="PIR" id="S44915">
    <property type="entry name" value="S44915"/>
</dbReference>
<dbReference type="RefSeq" id="NP_001367396.1">
    <property type="nucleotide sequence ID" value="NM_001379811.3"/>
</dbReference>
<dbReference type="RefSeq" id="NP_498720.1">
    <property type="nucleotide sequence ID" value="NM_066319.1"/>
</dbReference>
<dbReference type="SMR" id="P34671"/>
<dbReference type="FunCoup" id="P34671">
    <property type="interactions" value="811"/>
</dbReference>
<dbReference type="PaxDb" id="6239-ZK688.1"/>
<dbReference type="PeptideAtlas" id="P34671"/>
<dbReference type="EnsemblMetazoa" id="ZK688.1.1">
    <property type="protein sequence ID" value="ZK688.1.1"/>
    <property type="gene ID" value="WBGene00022796"/>
</dbReference>
<dbReference type="GeneID" id="191405"/>
<dbReference type="UCSC" id="ZK688.1">
    <property type="organism name" value="c. elegans"/>
</dbReference>
<dbReference type="AGR" id="WB:WBGene00022796"/>
<dbReference type="WormBase" id="ZK688.1">
    <property type="protein sequence ID" value="CE29165"/>
    <property type="gene ID" value="WBGene00022796"/>
</dbReference>
<dbReference type="eggNOG" id="ENOG502T3AA">
    <property type="taxonomic scope" value="Eukaryota"/>
</dbReference>
<dbReference type="HOGENOM" id="CLU_1246394_0_0_1"/>
<dbReference type="InParanoid" id="P34671"/>
<dbReference type="OMA" id="SPPFEYY"/>
<dbReference type="OrthoDB" id="5871633at2759"/>
<dbReference type="PRO" id="PR:P34671"/>
<dbReference type="Proteomes" id="UP000001940">
    <property type="component" value="Chromosome III"/>
</dbReference>
<dbReference type="Bgee" id="WBGene00022796">
    <property type="expression patterns" value="Expressed in pharyngeal muscle cell (C elegans) and 3 other cell types or tissues"/>
</dbReference>
<protein>
    <recommendedName>
        <fullName>Uncharacterized protein ZK688.1</fullName>
    </recommendedName>
</protein>
<keyword id="KW-1185">Reference proteome</keyword>
<name>YO21_CAEEL</name>
<reference key="1">
    <citation type="journal article" date="1994" name="Nature">
        <title>2.2 Mb of contiguous nucleotide sequence from chromosome III of C. elegans.</title>
        <authorList>
            <person name="Wilson R."/>
            <person name="Ainscough R."/>
            <person name="Anderson K."/>
            <person name="Baynes C."/>
            <person name="Berks M."/>
            <person name="Bonfield J."/>
            <person name="Burton J."/>
            <person name="Connell M."/>
            <person name="Copsey T."/>
            <person name="Cooper J."/>
            <person name="Coulson A."/>
            <person name="Craxton M."/>
            <person name="Dear S."/>
            <person name="Du Z."/>
            <person name="Durbin R."/>
            <person name="Favello A."/>
            <person name="Fraser A."/>
            <person name="Fulton L."/>
            <person name="Gardner A."/>
            <person name="Green P."/>
            <person name="Hawkins T."/>
            <person name="Hillier L."/>
            <person name="Jier M."/>
            <person name="Johnston L."/>
            <person name="Jones M."/>
            <person name="Kershaw J."/>
            <person name="Kirsten J."/>
            <person name="Laisster N."/>
            <person name="Latreille P."/>
            <person name="Lightning J."/>
            <person name="Lloyd C."/>
            <person name="Mortimore B."/>
            <person name="O'Callaghan M."/>
            <person name="Parsons J."/>
            <person name="Percy C."/>
            <person name="Rifken L."/>
            <person name="Roopra A."/>
            <person name="Saunders D."/>
            <person name="Shownkeen R."/>
            <person name="Sims M."/>
            <person name="Smaldon N."/>
            <person name="Smith A."/>
            <person name="Smith M."/>
            <person name="Sonnhammer E."/>
            <person name="Staden R."/>
            <person name="Sulston J."/>
            <person name="Thierry-Mieg J."/>
            <person name="Thomas K."/>
            <person name="Vaudin M."/>
            <person name="Vaughan K."/>
            <person name="Waterston R."/>
            <person name="Watson A."/>
            <person name="Weinstock L."/>
            <person name="Wilkinson-Sproat J."/>
            <person name="Wohldman P."/>
        </authorList>
    </citation>
    <scope>NUCLEOTIDE SEQUENCE [LARGE SCALE GENOMIC DNA]</scope>
    <source>
        <strain>Bristol N2</strain>
    </source>
</reference>
<reference key="2">
    <citation type="journal article" date="1998" name="Science">
        <title>Genome sequence of the nematode C. elegans: a platform for investigating biology.</title>
        <authorList>
            <consortium name="The C. elegans sequencing consortium"/>
        </authorList>
    </citation>
    <scope>NUCLEOTIDE SEQUENCE [LARGE SCALE GENOMIC DNA]</scope>
    <source>
        <strain>Bristol N2</strain>
    </source>
</reference>